<sequence length="142" mass="15790">MSNKHPLVQVIENAQLIERPSFAPGDTVVVQVKVREGERERLQAFEGVVIAKRNRGLNSAFTVRKISSGVGVERAFQLHSPIIDSIEVKRRGAVRRAKLYYLRERSGKSARIREKLAPRAPKVVKAKTDARVPDAVETAPGI</sequence>
<keyword id="KW-0687">Ribonucleoprotein</keyword>
<keyword id="KW-0689">Ribosomal protein</keyword>
<organism>
    <name type="scientific">Psychrobacter cryohalolentis (strain ATCC BAA-1226 / DSM 17306 / VKM B-2378 / K5)</name>
    <dbReference type="NCBI Taxonomy" id="335284"/>
    <lineage>
        <taxon>Bacteria</taxon>
        <taxon>Pseudomonadati</taxon>
        <taxon>Pseudomonadota</taxon>
        <taxon>Gammaproteobacteria</taxon>
        <taxon>Moraxellales</taxon>
        <taxon>Moraxellaceae</taxon>
        <taxon>Psychrobacter</taxon>
    </lineage>
</organism>
<name>RL19_PSYCK</name>
<comment type="function">
    <text evidence="1">This protein is located at the 30S-50S ribosomal subunit interface and may play a role in the structure and function of the aminoacyl-tRNA binding site.</text>
</comment>
<comment type="similarity">
    <text evidence="1">Belongs to the bacterial ribosomal protein bL19 family.</text>
</comment>
<dbReference type="EMBL" id="CP000323">
    <property type="protein sequence ID" value="ABE76096.1"/>
    <property type="molecule type" value="Genomic_DNA"/>
</dbReference>
<dbReference type="RefSeq" id="WP_011514626.1">
    <property type="nucleotide sequence ID" value="NC_007969.1"/>
</dbReference>
<dbReference type="SMR" id="Q1Q8A7"/>
<dbReference type="STRING" id="335284.Pcryo_2319"/>
<dbReference type="KEGG" id="pcr:Pcryo_2319"/>
<dbReference type="eggNOG" id="COG0335">
    <property type="taxonomic scope" value="Bacteria"/>
</dbReference>
<dbReference type="HOGENOM" id="CLU_103507_2_2_6"/>
<dbReference type="Proteomes" id="UP000002425">
    <property type="component" value="Chromosome"/>
</dbReference>
<dbReference type="GO" id="GO:0022625">
    <property type="term" value="C:cytosolic large ribosomal subunit"/>
    <property type="evidence" value="ECO:0007669"/>
    <property type="project" value="TreeGrafter"/>
</dbReference>
<dbReference type="GO" id="GO:0003735">
    <property type="term" value="F:structural constituent of ribosome"/>
    <property type="evidence" value="ECO:0007669"/>
    <property type="project" value="InterPro"/>
</dbReference>
<dbReference type="GO" id="GO:0006412">
    <property type="term" value="P:translation"/>
    <property type="evidence" value="ECO:0007669"/>
    <property type="project" value="UniProtKB-UniRule"/>
</dbReference>
<dbReference type="FunFam" id="2.30.30.790:FF:000001">
    <property type="entry name" value="50S ribosomal protein L19"/>
    <property type="match status" value="1"/>
</dbReference>
<dbReference type="Gene3D" id="2.30.30.790">
    <property type="match status" value="1"/>
</dbReference>
<dbReference type="HAMAP" id="MF_00402">
    <property type="entry name" value="Ribosomal_bL19"/>
    <property type="match status" value="1"/>
</dbReference>
<dbReference type="InterPro" id="IPR001857">
    <property type="entry name" value="Ribosomal_bL19"/>
</dbReference>
<dbReference type="InterPro" id="IPR018257">
    <property type="entry name" value="Ribosomal_bL19_CS"/>
</dbReference>
<dbReference type="InterPro" id="IPR038657">
    <property type="entry name" value="Ribosomal_bL19_sf"/>
</dbReference>
<dbReference type="InterPro" id="IPR008991">
    <property type="entry name" value="Translation_prot_SH3-like_sf"/>
</dbReference>
<dbReference type="NCBIfam" id="TIGR01024">
    <property type="entry name" value="rplS_bact"/>
    <property type="match status" value="1"/>
</dbReference>
<dbReference type="PANTHER" id="PTHR15680:SF9">
    <property type="entry name" value="LARGE RIBOSOMAL SUBUNIT PROTEIN BL19M"/>
    <property type="match status" value="1"/>
</dbReference>
<dbReference type="PANTHER" id="PTHR15680">
    <property type="entry name" value="RIBOSOMAL PROTEIN L19"/>
    <property type="match status" value="1"/>
</dbReference>
<dbReference type="Pfam" id="PF01245">
    <property type="entry name" value="Ribosomal_L19"/>
    <property type="match status" value="1"/>
</dbReference>
<dbReference type="PRINTS" id="PR00061">
    <property type="entry name" value="RIBOSOMALL19"/>
</dbReference>
<dbReference type="SUPFAM" id="SSF50104">
    <property type="entry name" value="Translation proteins SH3-like domain"/>
    <property type="match status" value="1"/>
</dbReference>
<dbReference type="PROSITE" id="PS01015">
    <property type="entry name" value="RIBOSOMAL_L19"/>
    <property type="match status" value="1"/>
</dbReference>
<evidence type="ECO:0000255" key="1">
    <source>
        <dbReference type="HAMAP-Rule" id="MF_00402"/>
    </source>
</evidence>
<evidence type="ECO:0000305" key="2"/>
<proteinExistence type="inferred from homology"/>
<accession>Q1Q8A7</accession>
<feature type="chain" id="PRO_0000252529" description="Large ribosomal subunit protein bL19">
    <location>
        <begin position="1"/>
        <end position="142"/>
    </location>
</feature>
<gene>
    <name evidence="1" type="primary">rplS</name>
    <name type="ordered locus">Pcryo_2319</name>
</gene>
<protein>
    <recommendedName>
        <fullName evidence="1">Large ribosomal subunit protein bL19</fullName>
    </recommendedName>
    <alternativeName>
        <fullName evidence="2">50S ribosomal protein L19</fullName>
    </alternativeName>
</protein>
<reference key="1">
    <citation type="submission" date="2006-03" db="EMBL/GenBank/DDBJ databases">
        <title>Complete sequence of chromosome of Psychrobacter cryohalolentis K5.</title>
        <authorList>
            <consortium name="US DOE Joint Genome Institute"/>
            <person name="Copeland A."/>
            <person name="Lucas S."/>
            <person name="Lapidus A."/>
            <person name="Barry K."/>
            <person name="Detter J.C."/>
            <person name="Glavina T."/>
            <person name="Hammon N."/>
            <person name="Israni S."/>
            <person name="Dalin E."/>
            <person name="Tice H."/>
            <person name="Pitluck S."/>
            <person name="Brettin T."/>
            <person name="Bruce D."/>
            <person name="Han C."/>
            <person name="Tapia R."/>
            <person name="Sims D.R."/>
            <person name="Gilna P."/>
            <person name="Schmutz J."/>
            <person name="Larimer F."/>
            <person name="Land M."/>
            <person name="Hauser L."/>
            <person name="Kyrpides N."/>
            <person name="Kim E."/>
            <person name="Richardson P."/>
        </authorList>
    </citation>
    <scope>NUCLEOTIDE SEQUENCE [LARGE SCALE GENOMIC DNA]</scope>
    <source>
        <strain>ATCC BAA-1226 / DSM 17306 / VKM B-2378 / K5</strain>
    </source>
</reference>